<feature type="chain" id="PRO_0000029707" description="Phosphatidylserine decarboxylase beta chain" evidence="1">
    <location>
        <begin position="1"/>
        <end position="251"/>
    </location>
</feature>
<feature type="chain" id="PRO_0000029708" description="Phosphatidylserine decarboxylase alpha chain" evidence="1">
    <location>
        <begin position="252"/>
        <end position="285"/>
    </location>
</feature>
<feature type="active site" description="Charge relay system; for autoendoproteolytic cleavage activity" evidence="1">
    <location>
        <position position="89"/>
    </location>
</feature>
<feature type="active site" description="Charge relay system; for autoendoproteolytic cleavage activity" evidence="1">
    <location>
        <position position="146"/>
    </location>
</feature>
<feature type="active site" description="Charge relay system; for autoendoproteolytic cleavage activity" evidence="1">
    <location>
        <position position="252"/>
    </location>
</feature>
<feature type="active site" description="Schiff-base intermediate with substrate; via pyruvic acid; for decarboxylase activity" evidence="1">
    <location>
        <position position="252"/>
    </location>
</feature>
<feature type="site" description="Cleavage (non-hydrolytic); by autocatalysis" evidence="1">
    <location>
        <begin position="251"/>
        <end position="252"/>
    </location>
</feature>
<feature type="modified residue" description="Pyruvic acid (Ser); by autocatalysis" evidence="1">
    <location>
        <position position="252"/>
    </location>
</feature>
<comment type="function">
    <text evidence="1">Catalyzes the formation of phosphatidylethanolamine (PtdEtn) from phosphatidylserine (PtdSer).</text>
</comment>
<comment type="catalytic activity">
    <reaction evidence="1">
        <text>a 1,2-diacyl-sn-glycero-3-phospho-L-serine + H(+) = a 1,2-diacyl-sn-glycero-3-phosphoethanolamine + CO2</text>
        <dbReference type="Rhea" id="RHEA:20828"/>
        <dbReference type="ChEBI" id="CHEBI:15378"/>
        <dbReference type="ChEBI" id="CHEBI:16526"/>
        <dbReference type="ChEBI" id="CHEBI:57262"/>
        <dbReference type="ChEBI" id="CHEBI:64612"/>
        <dbReference type="EC" id="4.1.1.65"/>
    </reaction>
</comment>
<comment type="cofactor">
    <cofactor evidence="1">
        <name>pyruvate</name>
        <dbReference type="ChEBI" id="CHEBI:15361"/>
    </cofactor>
    <text evidence="1">Binds 1 pyruvoyl group covalently per subunit.</text>
</comment>
<comment type="pathway">
    <text evidence="1">Phospholipid metabolism; phosphatidylethanolamine biosynthesis; phosphatidylethanolamine from CDP-diacylglycerol: step 2/2.</text>
</comment>
<comment type="subunit">
    <text evidence="1">Heterodimer of a large membrane-associated beta subunit and a small pyruvoyl-containing alpha subunit.</text>
</comment>
<comment type="subcellular location">
    <subcellularLocation>
        <location evidence="1">Cell membrane</location>
        <topology evidence="1">Peripheral membrane protein</topology>
    </subcellularLocation>
</comment>
<comment type="PTM">
    <text evidence="1">Is synthesized initially as an inactive proenzyme. Formation of the active enzyme involves a self-maturation process in which the active site pyruvoyl group is generated from an internal serine residue via an autocatalytic post-translational modification. Two non-identical subunits are generated from the proenzyme in this reaction, and the pyruvate is formed at the N-terminus of the alpha chain, which is derived from the carboxyl end of the proenzyme. The autoendoproteolytic cleavage occurs by a canonical serine protease mechanism, in which the side chain hydroxyl group of the serine supplies its oxygen atom to form the C-terminus of the beta chain, while the remainder of the serine residue undergoes an oxidative deamination to produce ammonia and the pyruvoyl prosthetic group on the alpha chain. During this reaction, the Ser that is part of the protease active site of the proenzyme becomes the pyruvoyl prosthetic group, which constitutes an essential element of the active site of the mature decarboxylase.</text>
</comment>
<comment type="similarity">
    <text evidence="1">Belongs to the phosphatidylserine decarboxylase family. PSD-B subfamily. Prokaryotic type I sub-subfamily.</text>
</comment>
<evidence type="ECO:0000255" key="1">
    <source>
        <dbReference type="HAMAP-Rule" id="MF_00662"/>
    </source>
</evidence>
<proteinExistence type="inferred from homology"/>
<name>PSD_VIBVU</name>
<dbReference type="EC" id="4.1.1.65" evidence="1"/>
<dbReference type="EMBL" id="AE016795">
    <property type="protein sequence ID" value="AAO09739.1"/>
    <property type="molecule type" value="Genomic_DNA"/>
</dbReference>
<dbReference type="SMR" id="Q8DCV8"/>
<dbReference type="KEGG" id="vvu:VV1_1284"/>
<dbReference type="HOGENOM" id="CLU_029061_4_1_6"/>
<dbReference type="UniPathway" id="UPA00558">
    <property type="reaction ID" value="UER00616"/>
</dbReference>
<dbReference type="Proteomes" id="UP000002275">
    <property type="component" value="Chromosome 1"/>
</dbReference>
<dbReference type="GO" id="GO:0005886">
    <property type="term" value="C:plasma membrane"/>
    <property type="evidence" value="ECO:0007669"/>
    <property type="project" value="UniProtKB-SubCell"/>
</dbReference>
<dbReference type="GO" id="GO:0004609">
    <property type="term" value="F:phosphatidylserine decarboxylase activity"/>
    <property type="evidence" value="ECO:0007669"/>
    <property type="project" value="UniProtKB-UniRule"/>
</dbReference>
<dbReference type="GO" id="GO:0006646">
    <property type="term" value="P:phosphatidylethanolamine biosynthetic process"/>
    <property type="evidence" value="ECO:0007669"/>
    <property type="project" value="UniProtKB-UniRule"/>
</dbReference>
<dbReference type="HAMAP" id="MF_00662">
    <property type="entry name" value="PS_decarb_PSD_B_type1"/>
    <property type="match status" value="1"/>
</dbReference>
<dbReference type="InterPro" id="IPR003817">
    <property type="entry name" value="PS_Dcarbxylase"/>
</dbReference>
<dbReference type="InterPro" id="IPR033177">
    <property type="entry name" value="PSD-B"/>
</dbReference>
<dbReference type="InterPro" id="IPR033178">
    <property type="entry name" value="PSD_type1_pro"/>
</dbReference>
<dbReference type="NCBIfam" id="TIGR00163">
    <property type="entry name" value="PS_decarb"/>
    <property type="match status" value="1"/>
</dbReference>
<dbReference type="PANTHER" id="PTHR10067">
    <property type="entry name" value="PHOSPHATIDYLSERINE DECARBOXYLASE"/>
    <property type="match status" value="1"/>
</dbReference>
<dbReference type="PANTHER" id="PTHR10067:SF6">
    <property type="entry name" value="PHOSPHATIDYLSERINE DECARBOXYLASE PROENZYME, MITOCHONDRIAL"/>
    <property type="match status" value="1"/>
</dbReference>
<dbReference type="Pfam" id="PF02666">
    <property type="entry name" value="PS_Dcarbxylase"/>
    <property type="match status" value="1"/>
</dbReference>
<organism>
    <name type="scientific">Vibrio vulnificus (strain CMCP6)</name>
    <dbReference type="NCBI Taxonomy" id="216895"/>
    <lineage>
        <taxon>Bacteria</taxon>
        <taxon>Pseudomonadati</taxon>
        <taxon>Pseudomonadota</taxon>
        <taxon>Gammaproteobacteria</taxon>
        <taxon>Vibrionales</taxon>
        <taxon>Vibrionaceae</taxon>
        <taxon>Vibrio</taxon>
    </lineage>
</organism>
<gene>
    <name evidence="1" type="primary">psd</name>
    <name type="ordered locus">VV1_1284</name>
</gene>
<protein>
    <recommendedName>
        <fullName evidence="1">Phosphatidylserine decarboxylase proenzyme</fullName>
        <ecNumber evidence="1">4.1.1.65</ecNumber>
    </recommendedName>
    <component>
        <recommendedName>
            <fullName evidence="1">Phosphatidylserine decarboxylase alpha chain</fullName>
        </recommendedName>
    </component>
    <component>
        <recommendedName>
            <fullName evidence="1">Phosphatidylserine decarboxylase beta chain</fullName>
        </recommendedName>
    </component>
</protein>
<accession>Q8DCV8</accession>
<reference key="1">
    <citation type="submission" date="2002-12" db="EMBL/GenBank/DDBJ databases">
        <title>Complete genome sequence of Vibrio vulnificus CMCP6.</title>
        <authorList>
            <person name="Rhee J.H."/>
            <person name="Kim S.Y."/>
            <person name="Chung S.S."/>
            <person name="Kim J.J."/>
            <person name="Moon Y.H."/>
            <person name="Jeong H."/>
            <person name="Choy H.E."/>
        </authorList>
    </citation>
    <scope>NUCLEOTIDE SEQUENCE [LARGE SCALE GENOMIC DNA]</scope>
    <source>
        <strain>CMCP6</strain>
    </source>
</reference>
<sequence>MDKIKVGLQYWIPQHGLTRLVGKLASAKAGSLTTAIIRWFIKQYNVNMDEAKHADPKHYKTFNEFFVRELKEGARPIAEGDAIITHPADACVSQFGPITNGQLIQAKGHDFSAQELLGGDAALAEEFKDGSFATLYLSPRDYHRVHMPCDGTLRQMIYVPGDLFSVNPLTAENVPNLFARNERVVCIFDTEFGPMAQVLVGATIVGSIEQVWAGTITPPRGNTVYKWDYPASGNHAVILKKGEEMGRFKLGSTVINLFAKDAIRFDESMANGQPTVMGTPYAHQQ</sequence>
<keyword id="KW-1003">Cell membrane</keyword>
<keyword id="KW-0210">Decarboxylase</keyword>
<keyword id="KW-0444">Lipid biosynthesis</keyword>
<keyword id="KW-0443">Lipid metabolism</keyword>
<keyword id="KW-0456">Lyase</keyword>
<keyword id="KW-0472">Membrane</keyword>
<keyword id="KW-0594">Phospholipid biosynthesis</keyword>
<keyword id="KW-1208">Phospholipid metabolism</keyword>
<keyword id="KW-0670">Pyruvate</keyword>
<keyword id="KW-0865">Zymogen</keyword>